<proteinExistence type="inferred from homology"/>
<name>ALFL9_ORYSI</name>
<protein>
    <recommendedName>
        <fullName>PHD finger protein ALFIN-LIKE 9</fullName>
    </recommendedName>
</protein>
<accession>B8B8C5</accession>
<comment type="function">
    <text evidence="1">Histone-binding component that specifically recognizes H3 tails trimethylated on 'Lys-4' (H3K4me3), which mark transcription start sites of virtually all active genes.</text>
</comment>
<comment type="subunit">
    <text evidence="1">Interacts with H3K4me3 and to a lesser extent with H3K4me2.</text>
</comment>
<comment type="subcellular location">
    <subcellularLocation>
        <location evidence="1">Nucleus</location>
    </subcellularLocation>
</comment>
<comment type="domain">
    <text evidence="1">The PHD-type zinc finger mediates the binding to H3K4me3.</text>
</comment>
<comment type="similarity">
    <text evidence="4">Belongs to the Alfin family.</text>
</comment>
<sequence>MDAQYNPRTVEEVFRDFKGRRAGLVRALTADVEDFFRQCDPEKENLCLYGFPNEHWEVNLPAEEVPPELPEPALGINFARDGMQEKDWLSMVAVHSDAWLLSVAFYFGARFGFDKNDRKRLFGMINDLPTIFEVVSGKSKAKPPSANNHSNSKSKSSNKTKSSEPRAKQPKPQPQPPVKNEGREEEGGPDDEEGGGGGGGGREEEHGETLCGACGESYGADEFWICCDICEKWFHGKCVKITPAKAEHIKQYKCPSCSGGNGGGGGGSGNGKRARPS</sequence>
<feature type="chain" id="PRO_0000412952" description="PHD finger protein ALFIN-LIKE 9">
    <location>
        <begin position="1"/>
        <end position="277"/>
    </location>
</feature>
<feature type="zinc finger region" description="PHD-type" evidence="2">
    <location>
        <begin position="208"/>
        <end position="260"/>
    </location>
</feature>
<feature type="region of interest" description="Disordered" evidence="3">
    <location>
        <begin position="138"/>
        <end position="206"/>
    </location>
</feature>
<feature type="region of interest" description="Disordered" evidence="3">
    <location>
        <begin position="255"/>
        <end position="277"/>
    </location>
</feature>
<feature type="compositionally biased region" description="Low complexity" evidence="3">
    <location>
        <begin position="145"/>
        <end position="160"/>
    </location>
</feature>
<feature type="compositionally biased region" description="Gly residues" evidence="3">
    <location>
        <begin position="259"/>
        <end position="270"/>
    </location>
</feature>
<feature type="site" description="Histone H3K4me3 binding" evidence="1">
    <location>
        <position position="218"/>
    </location>
</feature>
<feature type="site" description="Histone H3K4me3 binding" evidence="1">
    <location>
        <position position="224"/>
    </location>
</feature>
<feature type="site" description="Histone H3K4me3 binding" evidence="1">
    <location>
        <position position="228"/>
    </location>
</feature>
<feature type="site" description="Histone H3K4me3 binding" evidence="1">
    <location>
        <position position="233"/>
    </location>
</feature>
<keyword id="KW-0156">Chromatin regulator</keyword>
<keyword id="KW-0479">Metal-binding</keyword>
<keyword id="KW-0539">Nucleus</keyword>
<keyword id="KW-1185">Reference proteome</keyword>
<keyword id="KW-0804">Transcription</keyword>
<keyword id="KW-0805">Transcription regulation</keyword>
<keyword id="KW-0862">Zinc</keyword>
<keyword id="KW-0863">Zinc-finger</keyword>
<evidence type="ECO:0000250" key="1"/>
<evidence type="ECO:0000255" key="2">
    <source>
        <dbReference type="PROSITE-ProRule" id="PRU00146"/>
    </source>
</evidence>
<evidence type="ECO:0000256" key="3">
    <source>
        <dbReference type="SAM" id="MobiDB-lite"/>
    </source>
</evidence>
<evidence type="ECO:0000305" key="4"/>
<dbReference type="EMBL" id="CM000132">
    <property type="protein sequence ID" value="EEC82425.1"/>
    <property type="molecule type" value="Genomic_DNA"/>
</dbReference>
<dbReference type="SMR" id="B8B8C5"/>
<dbReference type="STRING" id="39946.B8B8C5"/>
<dbReference type="EnsemblPlants" id="BGIOSGA026108-TA">
    <property type="protein sequence ID" value="BGIOSGA026108-PA"/>
    <property type="gene ID" value="BGIOSGA026108"/>
</dbReference>
<dbReference type="EnsemblPlants" id="OsIR64_07g0023250.01">
    <property type="protein sequence ID" value="OsIR64_07g0023250.01"/>
    <property type="gene ID" value="OsIR64_07g0023250"/>
</dbReference>
<dbReference type="EnsemblPlants" id="OsKYG_07g0022680.01">
    <property type="protein sequence ID" value="OsKYG_07g0022680.01"/>
    <property type="gene ID" value="OsKYG_07g0022680"/>
</dbReference>
<dbReference type="EnsemblPlants" id="OsLaMu_07g0022520.01">
    <property type="protein sequence ID" value="OsLaMu_07g0022520.01"/>
    <property type="gene ID" value="OsLaMu_07g0022520"/>
</dbReference>
<dbReference type="EnsemblPlants" id="OsLima_07g0022530.01">
    <property type="protein sequence ID" value="OsLima_07g0022530.01"/>
    <property type="gene ID" value="OsLima_07g0022530"/>
</dbReference>
<dbReference type="EnsemblPlants" id="OsLiXu_07g0022780.01">
    <property type="protein sequence ID" value="OsLiXu_07g0022780.01"/>
    <property type="gene ID" value="OsLiXu_07g0022780"/>
</dbReference>
<dbReference type="EnsemblPlants" id="OsMH63_07G022540_01">
    <property type="protein sequence ID" value="OsMH63_07G022540_01"/>
    <property type="gene ID" value="OsMH63_07G022540"/>
</dbReference>
<dbReference type="EnsemblPlants" id="OsPr106_07g0022790.01">
    <property type="protein sequence ID" value="OsPr106_07g0022790.01"/>
    <property type="gene ID" value="OsPr106_07g0022790"/>
</dbReference>
<dbReference type="EnsemblPlants" id="OsPr106_07g0022790.02">
    <property type="protein sequence ID" value="OsPr106_07g0022790.02"/>
    <property type="gene ID" value="OsPr106_07g0022790"/>
</dbReference>
<dbReference type="EnsemblPlants" id="OsZS97_07G022410_01">
    <property type="protein sequence ID" value="OsZS97_07G022410_01"/>
    <property type="gene ID" value="OsZS97_07G022410"/>
</dbReference>
<dbReference type="Gramene" id="BGIOSGA026108-TA">
    <property type="protein sequence ID" value="BGIOSGA026108-PA"/>
    <property type="gene ID" value="BGIOSGA026108"/>
</dbReference>
<dbReference type="Gramene" id="OsIR64_07g0023250.01">
    <property type="protein sequence ID" value="OsIR64_07g0023250.01"/>
    <property type="gene ID" value="OsIR64_07g0023250"/>
</dbReference>
<dbReference type="Gramene" id="OsKYG_07g0022680.01">
    <property type="protein sequence ID" value="OsKYG_07g0022680.01"/>
    <property type="gene ID" value="OsKYG_07g0022680"/>
</dbReference>
<dbReference type="Gramene" id="OsLaMu_07g0022520.01">
    <property type="protein sequence ID" value="OsLaMu_07g0022520.01"/>
    <property type="gene ID" value="OsLaMu_07g0022520"/>
</dbReference>
<dbReference type="Gramene" id="OsLima_07g0022530.01">
    <property type="protein sequence ID" value="OsLima_07g0022530.01"/>
    <property type="gene ID" value="OsLima_07g0022530"/>
</dbReference>
<dbReference type="Gramene" id="OsLiXu_07g0022780.01">
    <property type="protein sequence ID" value="OsLiXu_07g0022780.01"/>
    <property type="gene ID" value="OsLiXu_07g0022780"/>
</dbReference>
<dbReference type="Gramene" id="OsMH63_07G022540_01">
    <property type="protein sequence ID" value="OsMH63_07G022540_01"/>
    <property type="gene ID" value="OsMH63_07G022540"/>
</dbReference>
<dbReference type="Gramene" id="OsPr106_07g0022790.01">
    <property type="protein sequence ID" value="OsPr106_07g0022790.01"/>
    <property type="gene ID" value="OsPr106_07g0022790"/>
</dbReference>
<dbReference type="Gramene" id="OsPr106_07g0022790.02">
    <property type="protein sequence ID" value="OsPr106_07g0022790.02"/>
    <property type="gene ID" value="OsPr106_07g0022790"/>
</dbReference>
<dbReference type="Gramene" id="OsZS97_07G022410_01">
    <property type="protein sequence ID" value="OsZS97_07G022410_01"/>
    <property type="gene ID" value="OsZS97_07G022410"/>
</dbReference>
<dbReference type="HOGENOM" id="CLU_058315_1_0_1"/>
<dbReference type="OMA" id="ARDGMED"/>
<dbReference type="Proteomes" id="UP000007015">
    <property type="component" value="Chromosome 7"/>
</dbReference>
<dbReference type="GO" id="GO:0005634">
    <property type="term" value="C:nucleus"/>
    <property type="evidence" value="ECO:0007669"/>
    <property type="project" value="UniProtKB-SubCell"/>
</dbReference>
<dbReference type="GO" id="GO:0042393">
    <property type="term" value="F:histone binding"/>
    <property type="evidence" value="ECO:0007669"/>
    <property type="project" value="InterPro"/>
</dbReference>
<dbReference type="GO" id="GO:0000976">
    <property type="term" value="F:transcription cis-regulatory region binding"/>
    <property type="evidence" value="ECO:0007669"/>
    <property type="project" value="TreeGrafter"/>
</dbReference>
<dbReference type="GO" id="GO:0003712">
    <property type="term" value="F:transcription coregulator activity"/>
    <property type="evidence" value="ECO:0007669"/>
    <property type="project" value="TreeGrafter"/>
</dbReference>
<dbReference type="GO" id="GO:0008270">
    <property type="term" value="F:zinc ion binding"/>
    <property type="evidence" value="ECO:0007669"/>
    <property type="project" value="UniProtKB-KW"/>
</dbReference>
<dbReference type="GO" id="GO:0006325">
    <property type="term" value="P:chromatin organization"/>
    <property type="evidence" value="ECO:0007669"/>
    <property type="project" value="UniProtKB-KW"/>
</dbReference>
<dbReference type="GO" id="GO:0006355">
    <property type="term" value="P:regulation of DNA-templated transcription"/>
    <property type="evidence" value="ECO:0007669"/>
    <property type="project" value="InterPro"/>
</dbReference>
<dbReference type="CDD" id="cd15613">
    <property type="entry name" value="PHD_AL_plant"/>
    <property type="match status" value="1"/>
</dbReference>
<dbReference type="FunFam" id="3.30.40.10:FF:000306">
    <property type="entry name" value="PHD finger alfin-like protein"/>
    <property type="match status" value="1"/>
</dbReference>
<dbReference type="Gene3D" id="3.30.40.10">
    <property type="entry name" value="Zinc/RING finger domain, C3HC4 (zinc finger)"/>
    <property type="match status" value="1"/>
</dbReference>
<dbReference type="InterPro" id="IPR045104">
    <property type="entry name" value="Alfin"/>
</dbReference>
<dbReference type="InterPro" id="IPR021998">
    <property type="entry name" value="Alfin_N"/>
</dbReference>
<dbReference type="InterPro" id="IPR044104">
    <property type="entry name" value="PHD_AL_plant"/>
</dbReference>
<dbReference type="InterPro" id="IPR019786">
    <property type="entry name" value="Zinc_finger_PHD-type_CS"/>
</dbReference>
<dbReference type="InterPro" id="IPR011011">
    <property type="entry name" value="Znf_FYVE_PHD"/>
</dbReference>
<dbReference type="InterPro" id="IPR001965">
    <property type="entry name" value="Znf_PHD"/>
</dbReference>
<dbReference type="InterPro" id="IPR019787">
    <property type="entry name" value="Znf_PHD-finger"/>
</dbReference>
<dbReference type="InterPro" id="IPR013083">
    <property type="entry name" value="Znf_RING/FYVE/PHD"/>
</dbReference>
<dbReference type="PANTHER" id="PTHR12321">
    <property type="entry name" value="CPG BINDING PROTEIN"/>
    <property type="match status" value="1"/>
</dbReference>
<dbReference type="PANTHER" id="PTHR12321:SF172">
    <property type="entry name" value="PHD FINGER PROTEIN ALFIN-LIKE 9"/>
    <property type="match status" value="1"/>
</dbReference>
<dbReference type="Pfam" id="PF12165">
    <property type="entry name" value="Alfin"/>
    <property type="match status" value="1"/>
</dbReference>
<dbReference type="Pfam" id="PF00628">
    <property type="entry name" value="PHD"/>
    <property type="match status" value="1"/>
</dbReference>
<dbReference type="SMART" id="SM00249">
    <property type="entry name" value="PHD"/>
    <property type="match status" value="1"/>
</dbReference>
<dbReference type="SUPFAM" id="SSF57903">
    <property type="entry name" value="FYVE/PHD zinc finger"/>
    <property type="match status" value="1"/>
</dbReference>
<dbReference type="PROSITE" id="PS01359">
    <property type="entry name" value="ZF_PHD_1"/>
    <property type="match status" value="1"/>
</dbReference>
<dbReference type="PROSITE" id="PS50016">
    <property type="entry name" value="ZF_PHD_2"/>
    <property type="match status" value="1"/>
</dbReference>
<reference key="1">
    <citation type="journal article" date="2005" name="PLoS Biol.">
        <title>The genomes of Oryza sativa: a history of duplications.</title>
        <authorList>
            <person name="Yu J."/>
            <person name="Wang J."/>
            <person name="Lin W."/>
            <person name="Li S."/>
            <person name="Li H."/>
            <person name="Zhou J."/>
            <person name="Ni P."/>
            <person name="Dong W."/>
            <person name="Hu S."/>
            <person name="Zeng C."/>
            <person name="Zhang J."/>
            <person name="Zhang Y."/>
            <person name="Li R."/>
            <person name="Xu Z."/>
            <person name="Li S."/>
            <person name="Li X."/>
            <person name="Zheng H."/>
            <person name="Cong L."/>
            <person name="Lin L."/>
            <person name="Yin J."/>
            <person name="Geng J."/>
            <person name="Li G."/>
            <person name="Shi J."/>
            <person name="Liu J."/>
            <person name="Lv H."/>
            <person name="Li J."/>
            <person name="Wang J."/>
            <person name="Deng Y."/>
            <person name="Ran L."/>
            <person name="Shi X."/>
            <person name="Wang X."/>
            <person name="Wu Q."/>
            <person name="Li C."/>
            <person name="Ren X."/>
            <person name="Wang J."/>
            <person name="Wang X."/>
            <person name="Li D."/>
            <person name="Liu D."/>
            <person name="Zhang X."/>
            <person name="Ji Z."/>
            <person name="Zhao W."/>
            <person name="Sun Y."/>
            <person name="Zhang Z."/>
            <person name="Bao J."/>
            <person name="Han Y."/>
            <person name="Dong L."/>
            <person name="Ji J."/>
            <person name="Chen P."/>
            <person name="Wu S."/>
            <person name="Liu J."/>
            <person name="Xiao Y."/>
            <person name="Bu D."/>
            <person name="Tan J."/>
            <person name="Yang L."/>
            <person name="Ye C."/>
            <person name="Zhang J."/>
            <person name="Xu J."/>
            <person name="Zhou Y."/>
            <person name="Yu Y."/>
            <person name="Zhang B."/>
            <person name="Zhuang S."/>
            <person name="Wei H."/>
            <person name="Liu B."/>
            <person name="Lei M."/>
            <person name="Yu H."/>
            <person name="Li Y."/>
            <person name="Xu H."/>
            <person name="Wei S."/>
            <person name="He X."/>
            <person name="Fang L."/>
            <person name="Zhang Z."/>
            <person name="Zhang Y."/>
            <person name="Huang X."/>
            <person name="Su Z."/>
            <person name="Tong W."/>
            <person name="Li J."/>
            <person name="Tong Z."/>
            <person name="Li S."/>
            <person name="Ye J."/>
            <person name="Wang L."/>
            <person name="Fang L."/>
            <person name="Lei T."/>
            <person name="Chen C.-S."/>
            <person name="Chen H.-C."/>
            <person name="Xu Z."/>
            <person name="Li H."/>
            <person name="Huang H."/>
            <person name="Zhang F."/>
            <person name="Xu H."/>
            <person name="Li N."/>
            <person name="Zhao C."/>
            <person name="Li S."/>
            <person name="Dong L."/>
            <person name="Huang Y."/>
            <person name="Li L."/>
            <person name="Xi Y."/>
            <person name="Qi Q."/>
            <person name="Li W."/>
            <person name="Zhang B."/>
            <person name="Hu W."/>
            <person name="Zhang Y."/>
            <person name="Tian X."/>
            <person name="Jiao Y."/>
            <person name="Liang X."/>
            <person name="Jin J."/>
            <person name="Gao L."/>
            <person name="Zheng W."/>
            <person name="Hao B."/>
            <person name="Liu S.-M."/>
            <person name="Wang W."/>
            <person name="Yuan L."/>
            <person name="Cao M."/>
            <person name="McDermott J."/>
            <person name="Samudrala R."/>
            <person name="Wang J."/>
            <person name="Wong G.K.-S."/>
            <person name="Yang H."/>
        </authorList>
    </citation>
    <scope>NUCLEOTIDE SEQUENCE [LARGE SCALE GENOMIC DNA]</scope>
    <source>
        <strain>cv. 93-11</strain>
    </source>
</reference>
<organism>
    <name type="scientific">Oryza sativa subsp. indica</name>
    <name type="common">Rice</name>
    <dbReference type="NCBI Taxonomy" id="39946"/>
    <lineage>
        <taxon>Eukaryota</taxon>
        <taxon>Viridiplantae</taxon>
        <taxon>Streptophyta</taxon>
        <taxon>Embryophyta</taxon>
        <taxon>Tracheophyta</taxon>
        <taxon>Spermatophyta</taxon>
        <taxon>Magnoliopsida</taxon>
        <taxon>Liliopsida</taxon>
        <taxon>Poales</taxon>
        <taxon>Poaceae</taxon>
        <taxon>BOP clade</taxon>
        <taxon>Oryzoideae</taxon>
        <taxon>Oryzeae</taxon>
        <taxon>Oryzinae</taxon>
        <taxon>Oryza</taxon>
        <taxon>Oryza sativa</taxon>
    </lineage>
</organism>
<gene>
    <name type="ORF">OsI_26819</name>
</gene>